<comment type="function">
    <text evidence="1">One of the primary rRNA binding proteins, it binds directly to 16S rRNA where it helps nucleate assembly of the platform of the 30S subunit by binding and bridging several RNA helices of the 16S rRNA.</text>
</comment>
<comment type="function">
    <text evidence="1">Forms an intersubunit bridge (bridge B4) with the 23S rRNA of the 50S subunit in the ribosome.</text>
</comment>
<comment type="subunit">
    <text evidence="1">Part of the 30S ribosomal subunit. Forms a bridge to the 50S subunit in the 70S ribosome, contacting the 23S rRNA.</text>
</comment>
<comment type="similarity">
    <text evidence="1">Belongs to the universal ribosomal protein uS15 family.</text>
</comment>
<proteinExistence type="inferred from homology"/>
<reference key="1">
    <citation type="submission" date="2008-01" db="EMBL/GenBank/DDBJ databases">
        <title>Complete sequence of Pseudomonas putida GB-1.</title>
        <authorList>
            <consortium name="US DOE Joint Genome Institute"/>
            <person name="Copeland A."/>
            <person name="Lucas S."/>
            <person name="Lapidus A."/>
            <person name="Barry K."/>
            <person name="Glavina del Rio T."/>
            <person name="Dalin E."/>
            <person name="Tice H."/>
            <person name="Pitluck S."/>
            <person name="Bruce D."/>
            <person name="Goodwin L."/>
            <person name="Chertkov O."/>
            <person name="Brettin T."/>
            <person name="Detter J.C."/>
            <person name="Han C."/>
            <person name="Kuske C.R."/>
            <person name="Schmutz J."/>
            <person name="Larimer F."/>
            <person name="Land M."/>
            <person name="Hauser L."/>
            <person name="Kyrpides N."/>
            <person name="Kim E."/>
            <person name="McCarthy J.K."/>
            <person name="Richardson P."/>
        </authorList>
    </citation>
    <scope>NUCLEOTIDE SEQUENCE [LARGE SCALE GENOMIC DNA]</scope>
    <source>
        <strain>GB-1</strain>
    </source>
</reference>
<evidence type="ECO:0000255" key="1">
    <source>
        <dbReference type="HAMAP-Rule" id="MF_01343"/>
    </source>
</evidence>
<evidence type="ECO:0000305" key="2"/>
<gene>
    <name evidence="1" type="primary">rpsO</name>
    <name type="ordered locus">PputGB1_4709</name>
</gene>
<organism>
    <name type="scientific">Pseudomonas putida (strain GB-1)</name>
    <dbReference type="NCBI Taxonomy" id="76869"/>
    <lineage>
        <taxon>Bacteria</taxon>
        <taxon>Pseudomonadati</taxon>
        <taxon>Pseudomonadota</taxon>
        <taxon>Gammaproteobacteria</taxon>
        <taxon>Pseudomonadales</taxon>
        <taxon>Pseudomonadaceae</taxon>
        <taxon>Pseudomonas</taxon>
    </lineage>
</organism>
<dbReference type="EMBL" id="CP000926">
    <property type="protein sequence ID" value="ABZ00596.1"/>
    <property type="molecule type" value="Genomic_DNA"/>
</dbReference>
<dbReference type="RefSeq" id="WP_012274241.1">
    <property type="nucleotide sequence ID" value="NC_010322.1"/>
</dbReference>
<dbReference type="SMR" id="B0KHX5"/>
<dbReference type="GeneID" id="45526175"/>
<dbReference type="KEGG" id="ppg:PputGB1_4709"/>
<dbReference type="eggNOG" id="COG0184">
    <property type="taxonomic scope" value="Bacteria"/>
</dbReference>
<dbReference type="HOGENOM" id="CLU_148518_0_0_6"/>
<dbReference type="Proteomes" id="UP000002157">
    <property type="component" value="Chromosome"/>
</dbReference>
<dbReference type="GO" id="GO:0022627">
    <property type="term" value="C:cytosolic small ribosomal subunit"/>
    <property type="evidence" value="ECO:0007669"/>
    <property type="project" value="TreeGrafter"/>
</dbReference>
<dbReference type="GO" id="GO:0019843">
    <property type="term" value="F:rRNA binding"/>
    <property type="evidence" value="ECO:0007669"/>
    <property type="project" value="UniProtKB-UniRule"/>
</dbReference>
<dbReference type="GO" id="GO:0003735">
    <property type="term" value="F:structural constituent of ribosome"/>
    <property type="evidence" value="ECO:0007669"/>
    <property type="project" value="InterPro"/>
</dbReference>
<dbReference type="GO" id="GO:0006412">
    <property type="term" value="P:translation"/>
    <property type="evidence" value="ECO:0007669"/>
    <property type="project" value="UniProtKB-UniRule"/>
</dbReference>
<dbReference type="CDD" id="cd00353">
    <property type="entry name" value="Ribosomal_S15p_S13e"/>
    <property type="match status" value="1"/>
</dbReference>
<dbReference type="FunFam" id="1.10.287.10:FF:000002">
    <property type="entry name" value="30S ribosomal protein S15"/>
    <property type="match status" value="1"/>
</dbReference>
<dbReference type="Gene3D" id="6.10.250.3130">
    <property type="match status" value="1"/>
</dbReference>
<dbReference type="Gene3D" id="1.10.287.10">
    <property type="entry name" value="S15/NS1, RNA-binding"/>
    <property type="match status" value="1"/>
</dbReference>
<dbReference type="HAMAP" id="MF_01343_B">
    <property type="entry name" value="Ribosomal_uS15_B"/>
    <property type="match status" value="1"/>
</dbReference>
<dbReference type="InterPro" id="IPR000589">
    <property type="entry name" value="Ribosomal_uS15"/>
</dbReference>
<dbReference type="InterPro" id="IPR005290">
    <property type="entry name" value="Ribosomal_uS15_bac-type"/>
</dbReference>
<dbReference type="InterPro" id="IPR009068">
    <property type="entry name" value="uS15_NS1_RNA-bd_sf"/>
</dbReference>
<dbReference type="NCBIfam" id="TIGR00952">
    <property type="entry name" value="S15_bact"/>
    <property type="match status" value="1"/>
</dbReference>
<dbReference type="PANTHER" id="PTHR23321">
    <property type="entry name" value="RIBOSOMAL PROTEIN S15, BACTERIAL AND ORGANELLAR"/>
    <property type="match status" value="1"/>
</dbReference>
<dbReference type="PANTHER" id="PTHR23321:SF26">
    <property type="entry name" value="SMALL RIBOSOMAL SUBUNIT PROTEIN US15M"/>
    <property type="match status" value="1"/>
</dbReference>
<dbReference type="Pfam" id="PF00312">
    <property type="entry name" value="Ribosomal_S15"/>
    <property type="match status" value="1"/>
</dbReference>
<dbReference type="SMART" id="SM01387">
    <property type="entry name" value="Ribosomal_S15"/>
    <property type="match status" value="1"/>
</dbReference>
<dbReference type="SUPFAM" id="SSF47060">
    <property type="entry name" value="S15/NS1 RNA-binding domain"/>
    <property type="match status" value="1"/>
</dbReference>
<dbReference type="PROSITE" id="PS00362">
    <property type="entry name" value="RIBOSOMAL_S15"/>
    <property type="match status" value="1"/>
</dbReference>
<sequence>MALSVEEKAQIVTDFQQAAGDTGSPEVQVALLTANINKLQGHFKANGKDHHSRRGLIRMVNQRRKLLDYLKGKDTTRYSALIGRLGLRR</sequence>
<accession>B0KHX5</accession>
<protein>
    <recommendedName>
        <fullName evidence="1">Small ribosomal subunit protein uS15</fullName>
    </recommendedName>
    <alternativeName>
        <fullName evidence="2">30S ribosomal protein S15</fullName>
    </alternativeName>
</protein>
<feature type="chain" id="PRO_1000086812" description="Small ribosomal subunit protein uS15">
    <location>
        <begin position="1"/>
        <end position="89"/>
    </location>
</feature>
<keyword id="KW-0687">Ribonucleoprotein</keyword>
<keyword id="KW-0689">Ribosomal protein</keyword>
<keyword id="KW-0694">RNA-binding</keyword>
<keyword id="KW-0699">rRNA-binding</keyword>
<name>RS15_PSEPG</name>